<organism>
    <name type="scientific">Maconellicoccus hirsutus</name>
    <name type="common">Pink hibiscus mealybug</name>
    <dbReference type="NCBI Taxonomy" id="177089"/>
    <lineage>
        <taxon>Eukaryota</taxon>
        <taxon>Metazoa</taxon>
        <taxon>Ecdysozoa</taxon>
        <taxon>Arthropoda</taxon>
        <taxon>Hexapoda</taxon>
        <taxon>Insecta</taxon>
        <taxon>Pterygota</taxon>
        <taxon>Neoptera</taxon>
        <taxon>Paraneoptera</taxon>
        <taxon>Hemiptera</taxon>
        <taxon>Sternorrhyncha</taxon>
        <taxon>Coccoidea</taxon>
        <taxon>Pseudococcidae</taxon>
        <taxon>Maconellicoccus</taxon>
    </lineage>
</organism>
<proteinExistence type="inferred from homology"/>
<reference key="1">
    <citation type="submission" date="2006-10" db="EMBL/GenBank/DDBJ databases">
        <title>Ribosomal proteins of the pink hibiscus mealybug, Maconellicoccus hirsutus.</title>
        <authorList>
            <person name="Hunter W.B."/>
            <person name="Hunnicutt L.E."/>
        </authorList>
    </citation>
    <scope>NUCLEOTIDE SEQUENCE [MRNA]</scope>
</reference>
<protein>
    <recommendedName>
        <fullName evidence="1">Large ribosomal subunit protein eL38</fullName>
    </recommendedName>
    <alternativeName>
        <fullName>60S ribosomal protein L38</fullName>
    </alternativeName>
</protein>
<dbReference type="EMBL" id="EF070572">
    <property type="protein sequence ID" value="ABM55638.1"/>
    <property type="molecule type" value="mRNA"/>
</dbReference>
<dbReference type="SMR" id="A2I469"/>
<dbReference type="GO" id="GO:0022625">
    <property type="term" value="C:cytosolic large ribosomal subunit"/>
    <property type="evidence" value="ECO:0007669"/>
    <property type="project" value="TreeGrafter"/>
</dbReference>
<dbReference type="GO" id="GO:0003735">
    <property type="term" value="F:structural constituent of ribosome"/>
    <property type="evidence" value="ECO:0007669"/>
    <property type="project" value="InterPro"/>
</dbReference>
<dbReference type="GO" id="GO:0022618">
    <property type="term" value="P:protein-RNA complex assembly"/>
    <property type="evidence" value="ECO:0007669"/>
    <property type="project" value="TreeGrafter"/>
</dbReference>
<dbReference type="GO" id="GO:0006412">
    <property type="term" value="P:translation"/>
    <property type="evidence" value="ECO:0007669"/>
    <property type="project" value="InterPro"/>
</dbReference>
<dbReference type="FunFam" id="3.30.720.90:FF:000001">
    <property type="entry name" value="60S ribosomal protein L38"/>
    <property type="match status" value="1"/>
</dbReference>
<dbReference type="Gene3D" id="3.30.720.90">
    <property type="match status" value="1"/>
</dbReference>
<dbReference type="InterPro" id="IPR002675">
    <property type="entry name" value="Ribosomal_eL38"/>
</dbReference>
<dbReference type="InterPro" id="IPR038464">
    <property type="entry name" value="Ribosomal_eL38_sf"/>
</dbReference>
<dbReference type="PANTHER" id="PTHR10965">
    <property type="entry name" value="60S RIBOSOMAL PROTEIN L38"/>
    <property type="match status" value="1"/>
</dbReference>
<dbReference type="PANTHER" id="PTHR10965:SF0">
    <property type="entry name" value="LARGE RIBOSOMAL SUBUNIT PROTEIN EL38"/>
    <property type="match status" value="1"/>
</dbReference>
<dbReference type="Pfam" id="PF01781">
    <property type="entry name" value="Ribosomal_L38e"/>
    <property type="match status" value="1"/>
</dbReference>
<evidence type="ECO:0000305" key="1"/>
<keyword id="KW-0687">Ribonucleoprotein</keyword>
<keyword id="KW-0689">Ribosomal protein</keyword>
<comment type="similarity">
    <text evidence="1">Belongs to the eukaryotic ribosomal protein eL38 family.</text>
</comment>
<gene>
    <name type="primary">RpL38</name>
</gene>
<sequence length="78" mass="9157">MPREIKEIKEFLIKARRKDAKSVKIKKNPTNVKFKVRCSRFLYTLVITDKEKAEKLKQSLPPGLQVKEIKCRKSKTTP</sequence>
<accession>A2I469</accession>
<name>RL38_MACHI</name>
<feature type="chain" id="PRO_0000319563" description="Large ribosomal subunit protein eL38">
    <location>
        <begin position="1"/>
        <end position="78"/>
    </location>
</feature>